<keyword id="KW-0687">Ribonucleoprotein</keyword>
<keyword id="KW-0689">Ribosomal protein</keyword>
<organism>
    <name type="scientific">Salmonella schwarzengrund (strain CVM19633)</name>
    <dbReference type="NCBI Taxonomy" id="439843"/>
    <lineage>
        <taxon>Bacteria</taxon>
        <taxon>Pseudomonadati</taxon>
        <taxon>Pseudomonadota</taxon>
        <taxon>Gammaproteobacteria</taxon>
        <taxon>Enterobacterales</taxon>
        <taxon>Enterobacteriaceae</taxon>
        <taxon>Salmonella</taxon>
    </lineage>
</organism>
<proteinExistence type="inferred from homology"/>
<sequence length="59" mass="6514">MAKTIKITQTRSAIGRLPKHKATLLGLGLRRIGHTVEREDTPAVRGMVNAVSFMVKVEE</sequence>
<accession>B4TXC4</accession>
<name>RL30_SALSV</name>
<comment type="subunit">
    <text evidence="1">Part of the 50S ribosomal subunit.</text>
</comment>
<comment type="similarity">
    <text evidence="1">Belongs to the universal ribosomal protein uL30 family.</text>
</comment>
<gene>
    <name evidence="1" type="primary">rpmD</name>
    <name type="ordered locus">SeSA_A3618</name>
</gene>
<evidence type="ECO:0000255" key="1">
    <source>
        <dbReference type="HAMAP-Rule" id="MF_01371"/>
    </source>
</evidence>
<evidence type="ECO:0000305" key="2"/>
<dbReference type="EMBL" id="CP001127">
    <property type="protein sequence ID" value="ACF91318.1"/>
    <property type="molecule type" value="Genomic_DNA"/>
</dbReference>
<dbReference type="RefSeq" id="WP_001140434.1">
    <property type="nucleotide sequence ID" value="NC_011094.1"/>
</dbReference>
<dbReference type="SMR" id="B4TXC4"/>
<dbReference type="GeneID" id="97393185"/>
<dbReference type="KEGG" id="sew:SeSA_A3618"/>
<dbReference type="HOGENOM" id="CLU_131047_1_4_6"/>
<dbReference type="Proteomes" id="UP000001865">
    <property type="component" value="Chromosome"/>
</dbReference>
<dbReference type="GO" id="GO:0022625">
    <property type="term" value="C:cytosolic large ribosomal subunit"/>
    <property type="evidence" value="ECO:0007669"/>
    <property type="project" value="TreeGrafter"/>
</dbReference>
<dbReference type="GO" id="GO:0003735">
    <property type="term" value="F:structural constituent of ribosome"/>
    <property type="evidence" value="ECO:0007669"/>
    <property type="project" value="InterPro"/>
</dbReference>
<dbReference type="GO" id="GO:0006412">
    <property type="term" value="P:translation"/>
    <property type="evidence" value="ECO:0007669"/>
    <property type="project" value="UniProtKB-UniRule"/>
</dbReference>
<dbReference type="CDD" id="cd01658">
    <property type="entry name" value="Ribosomal_L30"/>
    <property type="match status" value="1"/>
</dbReference>
<dbReference type="FunFam" id="3.30.1390.20:FF:000001">
    <property type="entry name" value="50S ribosomal protein L30"/>
    <property type="match status" value="1"/>
</dbReference>
<dbReference type="Gene3D" id="3.30.1390.20">
    <property type="entry name" value="Ribosomal protein L30, ferredoxin-like fold domain"/>
    <property type="match status" value="1"/>
</dbReference>
<dbReference type="HAMAP" id="MF_01371_B">
    <property type="entry name" value="Ribosomal_uL30_B"/>
    <property type="match status" value="1"/>
</dbReference>
<dbReference type="InterPro" id="IPR036919">
    <property type="entry name" value="Ribo_uL30_ferredoxin-like_sf"/>
</dbReference>
<dbReference type="InterPro" id="IPR005996">
    <property type="entry name" value="Ribosomal_uL30_bac-type"/>
</dbReference>
<dbReference type="InterPro" id="IPR018038">
    <property type="entry name" value="Ribosomal_uL30_CS"/>
</dbReference>
<dbReference type="InterPro" id="IPR016082">
    <property type="entry name" value="Ribosomal_uL30_ferredoxin-like"/>
</dbReference>
<dbReference type="NCBIfam" id="TIGR01308">
    <property type="entry name" value="rpmD_bact"/>
    <property type="match status" value="1"/>
</dbReference>
<dbReference type="PANTHER" id="PTHR15892:SF2">
    <property type="entry name" value="LARGE RIBOSOMAL SUBUNIT PROTEIN UL30M"/>
    <property type="match status" value="1"/>
</dbReference>
<dbReference type="PANTHER" id="PTHR15892">
    <property type="entry name" value="MITOCHONDRIAL RIBOSOMAL PROTEIN L30"/>
    <property type="match status" value="1"/>
</dbReference>
<dbReference type="Pfam" id="PF00327">
    <property type="entry name" value="Ribosomal_L30"/>
    <property type="match status" value="1"/>
</dbReference>
<dbReference type="PIRSF" id="PIRSF002211">
    <property type="entry name" value="Ribosomal_L30_bac-type"/>
    <property type="match status" value="1"/>
</dbReference>
<dbReference type="SUPFAM" id="SSF55129">
    <property type="entry name" value="Ribosomal protein L30p/L7e"/>
    <property type="match status" value="1"/>
</dbReference>
<dbReference type="PROSITE" id="PS00634">
    <property type="entry name" value="RIBOSOMAL_L30"/>
    <property type="match status" value="1"/>
</dbReference>
<feature type="chain" id="PRO_1000144717" description="Large ribosomal subunit protein uL30">
    <location>
        <begin position="1"/>
        <end position="59"/>
    </location>
</feature>
<reference key="1">
    <citation type="journal article" date="2011" name="J. Bacteriol.">
        <title>Comparative genomics of 28 Salmonella enterica isolates: evidence for CRISPR-mediated adaptive sublineage evolution.</title>
        <authorList>
            <person name="Fricke W.F."/>
            <person name="Mammel M.K."/>
            <person name="McDermott P.F."/>
            <person name="Tartera C."/>
            <person name="White D.G."/>
            <person name="Leclerc J.E."/>
            <person name="Ravel J."/>
            <person name="Cebula T.A."/>
        </authorList>
    </citation>
    <scope>NUCLEOTIDE SEQUENCE [LARGE SCALE GENOMIC DNA]</scope>
    <source>
        <strain>CVM19633</strain>
    </source>
</reference>
<protein>
    <recommendedName>
        <fullName evidence="1">Large ribosomal subunit protein uL30</fullName>
    </recommendedName>
    <alternativeName>
        <fullName evidence="2">50S ribosomal protein L30</fullName>
    </alternativeName>
</protein>